<comment type="function">
    <text evidence="1">NDH shuttles electrons from NAD(P)H:plastoquinone, via FMN and iron-sulfur (Fe-S) centers, to quinones in the photosynthetic chain and possibly in a chloroplast respiratory chain. The immediate electron acceptor for the enzyme in this species is believed to be plastoquinone. Couples the redox reaction to proton translocation, and thus conserves the redox energy in a proton gradient.</text>
</comment>
<comment type="catalytic activity">
    <reaction evidence="1">
        <text>a plastoquinone + NADH + (n+1) H(+)(in) = a plastoquinol + NAD(+) + n H(+)(out)</text>
        <dbReference type="Rhea" id="RHEA:42608"/>
        <dbReference type="Rhea" id="RHEA-COMP:9561"/>
        <dbReference type="Rhea" id="RHEA-COMP:9562"/>
        <dbReference type="ChEBI" id="CHEBI:15378"/>
        <dbReference type="ChEBI" id="CHEBI:17757"/>
        <dbReference type="ChEBI" id="CHEBI:57540"/>
        <dbReference type="ChEBI" id="CHEBI:57945"/>
        <dbReference type="ChEBI" id="CHEBI:62192"/>
    </reaction>
</comment>
<comment type="catalytic activity">
    <reaction evidence="1">
        <text>a plastoquinone + NADPH + (n+1) H(+)(in) = a plastoquinol + NADP(+) + n H(+)(out)</text>
        <dbReference type="Rhea" id="RHEA:42612"/>
        <dbReference type="Rhea" id="RHEA-COMP:9561"/>
        <dbReference type="Rhea" id="RHEA-COMP:9562"/>
        <dbReference type="ChEBI" id="CHEBI:15378"/>
        <dbReference type="ChEBI" id="CHEBI:17757"/>
        <dbReference type="ChEBI" id="CHEBI:57783"/>
        <dbReference type="ChEBI" id="CHEBI:58349"/>
        <dbReference type="ChEBI" id="CHEBI:62192"/>
    </reaction>
</comment>
<comment type="cofactor">
    <cofactor evidence="1">
        <name>[4Fe-4S] cluster</name>
        <dbReference type="ChEBI" id="CHEBI:49883"/>
    </cofactor>
    <text evidence="1">Binds 1 [4Fe-4S] cluster.</text>
</comment>
<comment type="subunit">
    <text evidence="1">NDH is composed of at least 16 different subunits, 5 of which are encoded in the nucleus.</text>
</comment>
<comment type="subcellular location">
    <subcellularLocation>
        <location evidence="1">Plastid</location>
        <location evidence="1">Chloroplast thylakoid membrane</location>
        <topology evidence="1">Peripheral membrane protein</topology>
        <orientation evidence="1">Stromal side</orientation>
    </subcellularLocation>
</comment>
<comment type="similarity">
    <text evidence="1">Belongs to the complex I 20 kDa subunit family.</text>
</comment>
<comment type="sequence caution" evidence="2">
    <conflict type="erroneous initiation">
        <sequence resource="EMBL-CDS" id="ABD48499"/>
    </conflict>
</comment>
<accession>A9L9A0</accession>
<proteinExistence type="inferred from homology"/>
<evidence type="ECO:0000255" key="1">
    <source>
        <dbReference type="HAMAP-Rule" id="MF_01356"/>
    </source>
</evidence>
<evidence type="ECO:0000305" key="2"/>
<protein>
    <recommendedName>
        <fullName evidence="1">NAD(P)H-quinone oxidoreductase subunit K, chloroplastic</fullName>
        <ecNumber evidence="1">7.1.1.-</ecNumber>
    </recommendedName>
    <alternativeName>
        <fullName evidence="1">NAD(P)H dehydrogenase subunit K</fullName>
    </alternativeName>
    <alternativeName>
        <fullName evidence="1">NADH-plastoquinone oxidoreductase subunit K</fullName>
    </alternativeName>
</protein>
<reference key="1">
    <citation type="journal article" date="2008" name="J. Mol. Evol.">
        <title>Complete sequence of the Duckweed (Lemna minor) chloroplast genome: structural organization and phylogenetic relationships to other angiosperms.</title>
        <authorList>
            <person name="Mardanov A.V."/>
            <person name="Ravin N.V."/>
            <person name="Kuznetsov B.B."/>
            <person name="Samigullin T.H."/>
            <person name="Antonov A.S."/>
            <person name="Kolganova T.V."/>
            <person name="Skyabin K.G."/>
        </authorList>
    </citation>
    <scope>NUCLEOTIDE SEQUENCE [LARGE SCALE GENOMIC DNA]</scope>
</reference>
<gene>
    <name evidence="1" type="primary">ndhK</name>
</gene>
<organism>
    <name type="scientific">Lemna minor</name>
    <name type="common">Common duckweed</name>
    <dbReference type="NCBI Taxonomy" id="4472"/>
    <lineage>
        <taxon>Eukaryota</taxon>
        <taxon>Viridiplantae</taxon>
        <taxon>Streptophyta</taxon>
        <taxon>Embryophyta</taxon>
        <taxon>Tracheophyta</taxon>
        <taxon>Spermatophyta</taxon>
        <taxon>Magnoliopsida</taxon>
        <taxon>Liliopsida</taxon>
        <taxon>Araceae</taxon>
        <taxon>Lemnoideae</taxon>
        <taxon>Lemna</taxon>
    </lineage>
</organism>
<keyword id="KW-0004">4Fe-4S</keyword>
<keyword id="KW-0150">Chloroplast</keyword>
<keyword id="KW-0408">Iron</keyword>
<keyword id="KW-0411">Iron-sulfur</keyword>
<keyword id="KW-0472">Membrane</keyword>
<keyword id="KW-0479">Metal-binding</keyword>
<keyword id="KW-0520">NAD</keyword>
<keyword id="KW-0521">NADP</keyword>
<keyword id="KW-0934">Plastid</keyword>
<keyword id="KW-0618">Plastoquinone</keyword>
<keyword id="KW-0874">Quinone</keyword>
<keyword id="KW-0793">Thylakoid</keyword>
<keyword id="KW-1278">Translocase</keyword>
<keyword id="KW-0813">Transport</keyword>
<feature type="chain" id="PRO_0000358554" description="NAD(P)H-quinone oxidoreductase subunit K, chloroplastic">
    <location>
        <begin position="1"/>
        <end position="225"/>
    </location>
</feature>
<feature type="binding site" evidence="1">
    <location>
        <position position="43"/>
    </location>
    <ligand>
        <name>[4Fe-4S] cluster</name>
        <dbReference type="ChEBI" id="CHEBI:49883"/>
    </ligand>
</feature>
<feature type="binding site" evidence="1">
    <location>
        <position position="44"/>
    </location>
    <ligand>
        <name>[4Fe-4S] cluster</name>
        <dbReference type="ChEBI" id="CHEBI:49883"/>
    </ligand>
</feature>
<feature type="binding site" evidence="1">
    <location>
        <position position="108"/>
    </location>
    <ligand>
        <name>[4Fe-4S] cluster</name>
        <dbReference type="ChEBI" id="CHEBI:49883"/>
    </ligand>
</feature>
<feature type="binding site" evidence="1">
    <location>
        <position position="139"/>
    </location>
    <ligand>
        <name>[4Fe-4S] cluster</name>
        <dbReference type="ChEBI" id="CHEBI:49883"/>
    </ligand>
</feature>
<dbReference type="EC" id="7.1.1.-" evidence="1"/>
<dbReference type="EMBL" id="DQ400350">
    <property type="protein sequence ID" value="ABD48499.1"/>
    <property type="status" value="ALT_INIT"/>
    <property type="molecule type" value="Genomic_DNA"/>
</dbReference>
<dbReference type="RefSeq" id="YP_001595512.1">
    <property type="nucleotide sequence ID" value="NC_010109.1"/>
</dbReference>
<dbReference type="SMR" id="A9L9A0"/>
<dbReference type="GeneID" id="5787507"/>
<dbReference type="GO" id="GO:0009535">
    <property type="term" value="C:chloroplast thylakoid membrane"/>
    <property type="evidence" value="ECO:0007669"/>
    <property type="project" value="UniProtKB-SubCell"/>
</dbReference>
<dbReference type="GO" id="GO:0045271">
    <property type="term" value="C:respiratory chain complex I"/>
    <property type="evidence" value="ECO:0007669"/>
    <property type="project" value="TreeGrafter"/>
</dbReference>
<dbReference type="GO" id="GO:0051539">
    <property type="term" value="F:4 iron, 4 sulfur cluster binding"/>
    <property type="evidence" value="ECO:0007669"/>
    <property type="project" value="UniProtKB-KW"/>
</dbReference>
<dbReference type="GO" id="GO:0005506">
    <property type="term" value="F:iron ion binding"/>
    <property type="evidence" value="ECO:0007669"/>
    <property type="project" value="UniProtKB-UniRule"/>
</dbReference>
<dbReference type="GO" id="GO:0008137">
    <property type="term" value="F:NADH dehydrogenase (ubiquinone) activity"/>
    <property type="evidence" value="ECO:0007669"/>
    <property type="project" value="InterPro"/>
</dbReference>
<dbReference type="GO" id="GO:0048038">
    <property type="term" value="F:quinone binding"/>
    <property type="evidence" value="ECO:0007669"/>
    <property type="project" value="UniProtKB-KW"/>
</dbReference>
<dbReference type="GO" id="GO:0009060">
    <property type="term" value="P:aerobic respiration"/>
    <property type="evidence" value="ECO:0007669"/>
    <property type="project" value="TreeGrafter"/>
</dbReference>
<dbReference type="GO" id="GO:0015990">
    <property type="term" value="P:electron transport coupled proton transport"/>
    <property type="evidence" value="ECO:0007669"/>
    <property type="project" value="TreeGrafter"/>
</dbReference>
<dbReference type="GO" id="GO:0019684">
    <property type="term" value="P:photosynthesis, light reaction"/>
    <property type="evidence" value="ECO:0007669"/>
    <property type="project" value="UniProtKB-UniRule"/>
</dbReference>
<dbReference type="FunFam" id="3.40.50.12280:FF:000003">
    <property type="entry name" value="NAD(P)H-quinone oxidoreductase subunit K, chloroplastic"/>
    <property type="match status" value="1"/>
</dbReference>
<dbReference type="Gene3D" id="3.40.50.12280">
    <property type="match status" value="1"/>
</dbReference>
<dbReference type="HAMAP" id="MF_01356">
    <property type="entry name" value="NDH1_NuoB"/>
    <property type="match status" value="1"/>
</dbReference>
<dbReference type="InterPro" id="IPR006137">
    <property type="entry name" value="NADH_UbQ_OxRdtase-like_20kDa"/>
</dbReference>
<dbReference type="InterPro" id="IPR006138">
    <property type="entry name" value="NADH_UQ_OxRdtase_20Kd_su"/>
</dbReference>
<dbReference type="NCBIfam" id="TIGR01957">
    <property type="entry name" value="nuoB_fam"/>
    <property type="match status" value="1"/>
</dbReference>
<dbReference type="NCBIfam" id="NF005012">
    <property type="entry name" value="PRK06411.1"/>
    <property type="match status" value="1"/>
</dbReference>
<dbReference type="PANTHER" id="PTHR11995">
    <property type="entry name" value="NADH DEHYDROGENASE"/>
    <property type="match status" value="1"/>
</dbReference>
<dbReference type="PANTHER" id="PTHR11995:SF14">
    <property type="entry name" value="NADH DEHYDROGENASE [UBIQUINONE] IRON-SULFUR PROTEIN 7, MITOCHONDRIAL"/>
    <property type="match status" value="1"/>
</dbReference>
<dbReference type="Pfam" id="PF01058">
    <property type="entry name" value="Oxidored_q6"/>
    <property type="match status" value="1"/>
</dbReference>
<dbReference type="SUPFAM" id="SSF56770">
    <property type="entry name" value="HydA/Nqo6-like"/>
    <property type="match status" value="1"/>
</dbReference>
<dbReference type="PROSITE" id="PS01150">
    <property type="entry name" value="COMPLEX1_20K"/>
    <property type="match status" value="1"/>
</dbReference>
<geneLocation type="chloroplast"/>
<name>NDHK_LEMMI</name>
<sequence length="225" mass="25350">MNLIEFPSLDQTMPNSVISTTLNDLSNWSRLSSLWPLLYGTSCCFIEFAALIGSRFDFDRYGLVPRSSPRQADLILTAGTVTMKMAPSLVRLYEQMPEPKYVIAMGACTITGGMFSTDSYSTVRGVDKLIPVDVYLPGCPPKPEAVIDAITKLRKKISREIYEDRIGSKQENRCFTINHKFHVQRSIHTGNYNKELLYQSPSTSEITSEEFFRSKSSISSHKLVN</sequence>